<name>STAT_MACFA</name>
<evidence type="ECO:0000256" key="1">
    <source>
        <dbReference type="SAM" id="MobiDB-lite"/>
    </source>
</evidence>
<evidence type="ECO:0000269" key="2">
    <source>
    </source>
</evidence>
<evidence type="ECO:0000269" key="3">
    <source>
    </source>
</evidence>
<evidence type="ECO:0000305" key="4"/>
<accession>P02809</accession>
<sequence length="61" mass="7464">MXFLXFXLXLLXMXXMXXXDSSEEKFLRRLRRFDEGRYGPYQPFAPQPLYPQPYQPYQPQY</sequence>
<gene>
    <name type="primary">STATH</name>
</gene>
<proteinExistence type="evidence at protein level"/>
<dbReference type="PIR" id="B32524">
    <property type="entry name" value="SBMQPI"/>
</dbReference>
<dbReference type="iPTMnet" id="P02809"/>
<dbReference type="Proteomes" id="UP000233100">
    <property type="component" value="Unplaced"/>
</dbReference>
<dbReference type="GO" id="GO:0005576">
    <property type="term" value="C:extracellular region"/>
    <property type="evidence" value="ECO:0007669"/>
    <property type="project" value="UniProtKB-SubCell"/>
</dbReference>
<dbReference type="GO" id="GO:0046848">
    <property type="term" value="F:hydroxyapatite binding"/>
    <property type="evidence" value="ECO:0007669"/>
    <property type="project" value="InterPro"/>
</dbReference>
<dbReference type="GO" id="GO:0031214">
    <property type="term" value="P:biomineral tissue development"/>
    <property type="evidence" value="ECO:0007669"/>
    <property type="project" value="UniProtKB-KW"/>
</dbReference>
<dbReference type="GO" id="GO:0042742">
    <property type="term" value="P:defense response to bacterium"/>
    <property type="evidence" value="ECO:0007669"/>
    <property type="project" value="InterPro"/>
</dbReference>
<dbReference type="GO" id="GO:0030500">
    <property type="term" value="P:regulation of bone mineralization"/>
    <property type="evidence" value="ECO:0007669"/>
    <property type="project" value="InterPro"/>
</dbReference>
<dbReference type="InterPro" id="IPR030773">
    <property type="entry name" value="Histatin/statherin"/>
</dbReference>
<dbReference type="InterPro" id="IPR005575">
    <property type="entry name" value="Statherin"/>
</dbReference>
<dbReference type="PANTHER" id="PTHR15057">
    <property type="entry name" value="STATHERIN"/>
    <property type="match status" value="1"/>
</dbReference>
<dbReference type="PANTHER" id="PTHR15057:SF3">
    <property type="entry name" value="STATHERIN"/>
    <property type="match status" value="1"/>
</dbReference>
<dbReference type="Pfam" id="PF03875">
    <property type="entry name" value="Statherin"/>
    <property type="match status" value="1"/>
</dbReference>
<dbReference type="PIRSF" id="PIRSF002565">
    <property type="entry name" value="Statherin"/>
    <property type="match status" value="1"/>
</dbReference>
<organism>
    <name type="scientific">Macaca fascicularis</name>
    <name type="common">Crab-eating macaque</name>
    <name type="synonym">Cynomolgus monkey</name>
    <dbReference type="NCBI Taxonomy" id="9541"/>
    <lineage>
        <taxon>Eukaryota</taxon>
        <taxon>Metazoa</taxon>
        <taxon>Chordata</taxon>
        <taxon>Craniata</taxon>
        <taxon>Vertebrata</taxon>
        <taxon>Euteleostomi</taxon>
        <taxon>Mammalia</taxon>
        <taxon>Eutheria</taxon>
        <taxon>Euarchontoglires</taxon>
        <taxon>Primates</taxon>
        <taxon>Haplorrhini</taxon>
        <taxon>Catarrhini</taxon>
        <taxon>Cercopithecidae</taxon>
        <taxon>Cercopithecinae</taxon>
        <taxon>Macaca</taxon>
    </lineage>
</organism>
<reference key="1">
    <citation type="journal article" date="1987" name="J. Dent. Res.">
        <title>Molecular basis of salivary proline-rich protein and peptide synthesis: cell-free translations and processing of human and macaque statherin mRNAs and partial amino acid sequence of their signal peptides.</title>
        <authorList>
            <person name="Oppenheim F.G."/>
            <person name="Hay D.I."/>
            <person name="Smith D.J."/>
            <person name="Offner G.D."/>
            <person name="Troxler R.F."/>
        </authorList>
    </citation>
    <scope>PARTIAL PROTEIN SEQUENCE OF 1-19</scope>
</reference>
<reference key="2">
    <citation type="journal article" date="1982" name="J. Biol. Chem.">
        <title>Phosphoproteins in the parotid saliva from the subhuman primate Macaca fascicularis. Isolation and characterization of a proline-rich phosphoglycoprotein and the complete covalent structure of a proline-rich phosphopeptide.</title>
        <authorList>
            <person name="Oppenheim F.G."/>
            <person name="Offner G.D."/>
            <person name="Troxler R.F."/>
        </authorList>
    </citation>
    <scope>PROTEIN SEQUENCE OF 20-61</scope>
    <scope>PHOSPHORYLATION AT SER-21 AND SER-22</scope>
</reference>
<protein>
    <recommendedName>
        <fullName>Statherin</fullName>
    </recommendedName>
</protein>
<feature type="signal peptide" evidence="2 3">
    <location>
        <begin position="1"/>
        <end position="19"/>
    </location>
</feature>
<feature type="chain" id="PRO_0000022423" description="Statherin">
    <location>
        <begin position="20"/>
        <end position="61"/>
    </location>
</feature>
<feature type="region of interest" description="Hydroxyapatite-binding; inhibits crystal growth">
    <location>
        <begin position="20"/>
        <end position="25"/>
    </location>
</feature>
<feature type="region of interest" description="Disordered" evidence="1">
    <location>
        <begin position="37"/>
        <end position="61"/>
    </location>
</feature>
<feature type="region of interest" description="Hydrophobic; inhibits precipitation of calcium phosphate salts">
    <location>
        <begin position="37"/>
        <end position="61"/>
    </location>
</feature>
<feature type="compositionally biased region" description="Pro residues" evidence="1">
    <location>
        <begin position="43"/>
        <end position="61"/>
    </location>
</feature>
<feature type="modified residue" description="Phosphoserine" evidence="3">
    <location>
        <position position="21"/>
    </location>
</feature>
<feature type="modified residue" description="Phosphoserine" evidence="3">
    <location>
        <position position="22"/>
    </location>
</feature>
<comment type="function">
    <text>Salivary protein that stabilizes saliva supersaturated with calcium salts by inhibiting the precipitation of calcium phosphate salts. It also modulates hydroxyapatite crystal formation on the tooth surface.</text>
</comment>
<comment type="subcellular location">
    <subcellularLocation>
        <location>Secreted</location>
    </subcellularLocation>
</comment>
<comment type="tissue specificity">
    <text>Secreted by parotid and submandibular glands.</text>
</comment>
<comment type="similarity">
    <text evidence="4">Belongs to the histatin/statherin family.</text>
</comment>
<keyword id="KW-0091">Biomineralization</keyword>
<keyword id="KW-0903">Direct protein sequencing</keyword>
<keyword id="KW-0597">Phosphoprotein</keyword>
<keyword id="KW-1185">Reference proteome</keyword>
<keyword id="KW-0964">Secreted</keyword>
<keyword id="KW-0732">Signal</keyword>